<comment type="catalytic activity">
    <reaction evidence="1">
        <text>CMP + ATP = CDP + ADP</text>
        <dbReference type="Rhea" id="RHEA:11600"/>
        <dbReference type="ChEBI" id="CHEBI:30616"/>
        <dbReference type="ChEBI" id="CHEBI:58069"/>
        <dbReference type="ChEBI" id="CHEBI:60377"/>
        <dbReference type="ChEBI" id="CHEBI:456216"/>
        <dbReference type="EC" id="2.7.4.25"/>
    </reaction>
</comment>
<comment type="catalytic activity">
    <reaction evidence="1">
        <text>dCMP + ATP = dCDP + ADP</text>
        <dbReference type="Rhea" id="RHEA:25094"/>
        <dbReference type="ChEBI" id="CHEBI:30616"/>
        <dbReference type="ChEBI" id="CHEBI:57566"/>
        <dbReference type="ChEBI" id="CHEBI:58593"/>
        <dbReference type="ChEBI" id="CHEBI:456216"/>
        <dbReference type="EC" id="2.7.4.25"/>
    </reaction>
</comment>
<comment type="subcellular location">
    <subcellularLocation>
        <location evidence="1">Cytoplasm</location>
    </subcellularLocation>
</comment>
<comment type="similarity">
    <text evidence="1">Belongs to the cytidylate kinase family. Type 1 subfamily.</text>
</comment>
<proteinExistence type="inferred from homology"/>
<protein>
    <recommendedName>
        <fullName evidence="1">Cytidylate kinase</fullName>
        <shortName evidence="1">CK</shortName>
        <ecNumber evidence="1">2.7.4.25</ecNumber>
    </recommendedName>
    <alternativeName>
        <fullName evidence="1">Cytidine monophosphate kinase</fullName>
        <shortName evidence="1">CMP kinase</shortName>
    </alternativeName>
</protein>
<organism>
    <name type="scientific">Streptococcus thermophilus (strain CNRZ 1066)</name>
    <dbReference type="NCBI Taxonomy" id="299768"/>
    <lineage>
        <taxon>Bacteria</taxon>
        <taxon>Bacillati</taxon>
        <taxon>Bacillota</taxon>
        <taxon>Bacilli</taxon>
        <taxon>Lactobacillales</taxon>
        <taxon>Streptococcaceae</taxon>
        <taxon>Streptococcus</taxon>
    </lineage>
</organism>
<reference key="1">
    <citation type="journal article" date="2004" name="Nat. Biotechnol.">
        <title>Complete sequence and comparative genome analysis of the dairy bacterium Streptococcus thermophilus.</title>
        <authorList>
            <person name="Bolotin A."/>
            <person name="Quinquis B."/>
            <person name="Renault P."/>
            <person name="Sorokin A."/>
            <person name="Ehrlich S.D."/>
            <person name="Kulakauskas S."/>
            <person name="Lapidus A."/>
            <person name="Goltsman E."/>
            <person name="Mazur M."/>
            <person name="Pusch G.D."/>
            <person name="Fonstein M."/>
            <person name="Overbeek R."/>
            <person name="Kyprides N."/>
            <person name="Purnelle B."/>
            <person name="Prozzi D."/>
            <person name="Ngui K."/>
            <person name="Masuy D."/>
            <person name="Hancy F."/>
            <person name="Burteau S."/>
            <person name="Boutry M."/>
            <person name="Delcour J."/>
            <person name="Goffeau A."/>
            <person name="Hols P."/>
        </authorList>
    </citation>
    <scope>NUCLEOTIDE SEQUENCE [LARGE SCALE GENOMIC DNA]</scope>
    <source>
        <strain>CNRZ 1066</strain>
    </source>
</reference>
<evidence type="ECO:0000255" key="1">
    <source>
        <dbReference type="HAMAP-Rule" id="MF_00238"/>
    </source>
</evidence>
<dbReference type="EC" id="2.7.4.25" evidence="1"/>
<dbReference type="EMBL" id="CP000024">
    <property type="protein sequence ID" value="AAV62683.1"/>
    <property type="molecule type" value="Genomic_DNA"/>
</dbReference>
<dbReference type="RefSeq" id="WP_002950906.1">
    <property type="nucleotide sequence ID" value="NC_006449.1"/>
</dbReference>
<dbReference type="SMR" id="Q5LZL6"/>
<dbReference type="GeneID" id="66898931"/>
<dbReference type="KEGG" id="stc:str1135"/>
<dbReference type="HOGENOM" id="CLU_079959_0_2_9"/>
<dbReference type="GO" id="GO:0005829">
    <property type="term" value="C:cytosol"/>
    <property type="evidence" value="ECO:0007669"/>
    <property type="project" value="TreeGrafter"/>
</dbReference>
<dbReference type="GO" id="GO:0005524">
    <property type="term" value="F:ATP binding"/>
    <property type="evidence" value="ECO:0007669"/>
    <property type="project" value="UniProtKB-UniRule"/>
</dbReference>
<dbReference type="GO" id="GO:0036430">
    <property type="term" value="F:CMP kinase activity"/>
    <property type="evidence" value="ECO:0007669"/>
    <property type="project" value="RHEA"/>
</dbReference>
<dbReference type="GO" id="GO:0036431">
    <property type="term" value="F:dCMP kinase activity"/>
    <property type="evidence" value="ECO:0007669"/>
    <property type="project" value="RHEA"/>
</dbReference>
<dbReference type="GO" id="GO:0015949">
    <property type="term" value="P:nucleobase-containing small molecule interconversion"/>
    <property type="evidence" value="ECO:0007669"/>
    <property type="project" value="TreeGrafter"/>
</dbReference>
<dbReference type="GO" id="GO:0006220">
    <property type="term" value="P:pyrimidine nucleotide metabolic process"/>
    <property type="evidence" value="ECO:0007669"/>
    <property type="project" value="UniProtKB-UniRule"/>
</dbReference>
<dbReference type="CDD" id="cd02020">
    <property type="entry name" value="CMPK"/>
    <property type="match status" value="1"/>
</dbReference>
<dbReference type="FunFam" id="3.40.50.300:FF:000484">
    <property type="entry name" value="Cytidylate kinase"/>
    <property type="match status" value="1"/>
</dbReference>
<dbReference type="Gene3D" id="3.40.50.300">
    <property type="entry name" value="P-loop containing nucleotide triphosphate hydrolases"/>
    <property type="match status" value="1"/>
</dbReference>
<dbReference type="HAMAP" id="MF_00238">
    <property type="entry name" value="Cytidyl_kinase_type1"/>
    <property type="match status" value="1"/>
</dbReference>
<dbReference type="InterPro" id="IPR003136">
    <property type="entry name" value="Cytidylate_kin"/>
</dbReference>
<dbReference type="InterPro" id="IPR011994">
    <property type="entry name" value="Cytidylate_kinase_dom"/>
</dbReference>
<dbReference type="InterPro" id="IPR027417">
    <property type="entry name" value="P-loop_NTPase"/>
</dbReference>
<dbReference type="NCBIfam" id="TIGR00017">
    <property type="entry name" value="cmk"/>
    <property type="match status" value="1"/>
</dbReference>
<dbReference type="PANTHER" id="PTHR21299:SF2">
    <property type="entry name" value="CYTIDYLATE KINASE"/>
    <property type="match status" value="1"/>
</dbReference>
<dbReference type="PANTHER" id="PTHR21299">
    <property type="entry name" value="CYTIDYLATE KINASE/PANTOATE-BETA-ALANINE LIGASE"/>
    <property type="match status" value="1"/>
</dbReference>
<dbReference type="Pfam" id="PF02224">
    <property type="entry name" value="Cytidylate_kin"/>
    <property type="match status" value="1"/>
</dbReference>
<dbReference type="SUPFAM" id="SSF52540">
    <property type="entry name" value="P-loop containing nucleoside triphosphate hydrolases"/>
    <property type="match status" value="1"/>
</dbReference>
<name>KCY_STRT1</name>
<keyword id="KW-0067">ATP-binding</keyword>
<keyword id="KW-0963">Cytoplasm</keyword>
<keyword id="KW-0418">Kinase</keyword>
<keyword id="KW-0547">Nucleotide-binding</keyword>
<keyword id="KW-0808">Transferase</keyword>
<accession>Q5LZL6</accession>
<feature type="chain" id="PRO_1000048304" description="Cytidylate kinase">
    <location>
        <begin position="1"/>
        <end position="226"/>
    </location>
</feature>
<feature type="binding site" evidence="1">
    <location>
        <begin position="10"/>
        <end position="18"/>
    </location>
    <ligand>
        <name>ATP</name>
        <dbReference type="ChEBI" id="CHEBI:30616"/>
    </ligand>
</feature>
<gene>
    <name evidence="1" type="primary">cmk</name>
    <name type="ordered locus">str1135</name>
</gene>
<sequence>MKDIRIAIDGPASSGKSTVAKIIAKNLGYTYLDTGAMYRSATYLALQNGLTEENVPEILDQLSQNPISFGKAADGSPKVYVGDVDITHPIRDNQVTNNVSWVAAIPEVRQELVSQQQRIAQEGGIIMDGRDIGTVVLPDAELKIFMIASVDERAERRYKENIEKGIPADLETLKKEIAERDYKDSHREVSPLRPAEDAITFDTTGVSIDGVVEFIQEKAKKIIDKG</sequence>